<sequence>MKSAVLVFPGINRERDMARALKLVSGHDAAMVWHADTELPNGTDLVVVPGGFSYGDYLRCGAIAARAPVMDAVRKFASDGGLVLGVCNGFQILCESGLLPGVLMRNARLKFICRDVHLRVERNDSPFTRGYAAGQVIKVPVAHGEGNYEADEETVKRLEGDGRVLYRYCSPEGEIGESHNINGAAASIAGIVSERGNVLGMMPHPENHVEDIMGCTDGRGLFAGLVEHLKTAA</sequence>
<organism>
    <name type="scientific">Rhodopseudomonas palustris (strain HaA2)</name>
    <dbReference type="NCBI Taxonomy" id="316058"/>
    <lineage>
        <taxon>Bacteria</taxon>
        <taxon>Pseudomonadati</taxon>
        <taxon>Pseudomonadota</taxon>
        <taxon>Alphaproteobacteria</taxon>
        <taxon>Hyphomicrobiales</taxon>
        <taxon>Nitrobacteraceae</taxon>
        <taxon>Rhodopseudomonas</taxon>
    </lineage>
</organism>
<keyword id="KW-0067">ATP-binding</keyword>
<keyword id="KW-0963">Cytoplasm</keyword>
<keyword id="KW-0315">Glutamine amidotransferase</keyword>
<keyword id="KW-0378">Hydrolase</keyword>
<keyword id="KW-0436">Ligase</keyword>
<keyword id="KW-0547">Nucleotide-binding</keyword>
<keyword id="KW-0658">Purine biosynthesis</keyword>
<keyword id="KW-1185">Reference proteome</keyword>
<gene>
    <name evidence="1" type="primary">purQ</name>
    <name type="ordered locus">RPB_3716</name>
</gene>
<comment type="function">
    <text evidence="1">Part of the phosphoribosylformylglycinamidine synthase complex involved in the purines biosynthetic pathway. Catalyzes the ATP-dependent conversion of formylglycinamide ribonucleotide (FGAR) and glutamine to yield formylglycinamidine ribonucleotide (FGAM) and glutamate. The FGAM synthase complex is composed of three subunits. PurQ produces an ammonia molecule by converting glutamine to glutamate. PurL transfers the ammonia molecule to FGAR to form FGAM in an ATP-dependent manner. PurS interacts with PurQ and PurL and is thought to assist in the transfer of the ammonia molecule from PurQ to PurL.</text>
</comment>
<comment type="catalytic activity">
    <reaction evidence="1">
        <text>N(2)-formyl-N(1)-(5-phospho-beta-D-ribosyl)glycinamide + L-glutamine + ATP + H2O = 2-formamido-N(1)-(5-O-phospho-beta-D-ribosyl)acetamidine + L-glutamate + ADP + phosphate + H(+)</text>
        <dbReference type="Rhea" id="RHEA:17129"/>
        <dbReference type="ChEBI" id="CHEBI:15377"/>
        <dbReference type="ChEBI" id="CHEBI:15378"/>
        <dbReference type="ChEBI" id="CHEBI:29985"/>
        <dbReference type="ChEBI" id="CHEBI:30616"/>
        <dbReference type="ChEBI" id="CHEBI:43474"/>
        <dbReference type="ChEBI" id="CHEBI:58359"/>
        <dbReference type="ChEBI" id="CHEBI:147286"/>
        <dbReference type="ChEBI" id="CHEBI:147287"/>
        <dbReference type="ChEBI" id="CHEBI:456216"/>
        <dbReference type="EC" id="6.3.5.3"/>
    </reaction>
</comment>
<comment type="catalytic activity">
    <reaction evidence="1">
        <text>L-glutamine + H2O = L-glutamate + NH4(+)</text>
        <dbReference type="Rhea" id="RHEA:15889"/>
        <dbReference type="ChEBI" id="CHEBI:15377"/>
        <dbReference type="ChEBI" id="CHEBI:28938"/>
        <dbReference type="ChEBI" id="CHEBI:29985"/>
        <dbReference type="ChEBI" id="CHEBI:58359"/>
        <dbReference type="EC" id="3.5.1.2"/>
    </reaction>
</comment>
<comment type="pathway">
    <text evidence="1">Purine metabolism; IMP biosynthesis via de novo pathway; 5-amino-1-(5-phospho-D-ribosyl)imidazole from N(2)-formyl-N(1)-(5-phospho-D-ribosyl)glycinamide: step 1/2.</text>
</comment>
<comment type="subunit">
    <text evidence="1">Part of the FGAM synthase complex composed of 1 PurL, 1 PurQ and 2 PurS subunits.</text>
</comment>
<comment type="subcellular location">
    <subcellularLocation>
        <location evidence="1">Cytoplasm</location>
    </subcellularLocation>
</comment>
<name>PURQ_RHOP2</name>
<proteinExistence type="inferred from homology"/>
<reference key="1">
    <citation type="submission" date="2006-01" db="EMBL/GenBank/DDBJ databases">
        <title>Complete sequence of Rhodopseudomonas palustris HaA2.</title>
        <authorList>
            <consortium name="US DOE Joint Genome Institute"/>
            <person name="Copeland A."/>
            <person name="Lucas S."/>
            <person name="Lapidus A."/>
            <person name="Barry K."/>
            <person name="Detter J.C."/>
            <person name="Glavina T."/>
            <person name="Hammon N."/>
            <person name="Israni S."/>
            <person name="Pitluck S."/>
            <person name="Chain P."/>
            <person name="Malfatti S."/>
            <person name="Shin M."/>
            <person name="Vergez L."/>
            <person name="Schmutz J."/>
            <person name="Larimer F."/>
            <person name="Land M."/>
            <person name="Hauser L."/>
            <person name="Pelletier D.A."/>
            <person name="Kyrpides N."/>
            <person name="Anderson I."/>
            <person name="Oda Y."/>
            <person name="Harwood C.S."/>
            <person name="Richardson P."/>
        </authorList>
    </citation>
    <scope>NUCLEOTIDE SEQUENCE [LARGE SCALE GENOMIC DNA]</scope>
    <source>
        <strain>HaA2</strain>
    </source>
</reference>
<dbReference type="EC" id="6.3.5.3" evidence="1"/>
<dbReference type="EC" id="3.5.1.2" evidence="1"/>
<dbReference type="EMBL" id="CP000250">
    <property type="protein sequence ID" value="ABD08411.1"/>
    <property type="molecule type" value="Genomic_DNA"/>
</dbReference>
<dbReference type="RefSeq" id="WP_011442595.1">
    <property type="nucleotide sequence ID" value="NC_007778.1"/>
</dbReference>
<dbReference type="SMR" id="Q2ITP9"/>
<dbReference type="STRING" id="316058.RPB_3716"/>
<dbReference type="KEGG" id="rpb:RPB_3716"/>
<dbReference type="eggNOG" id="COG0047">
    <property type="taxonomic scope" value="Bacteria"/>
</dbReference>
<dbReference type="HOGENOM" id="CLU_001031_3_1_5"/>
<dbReference type="OrthoDB" id="9804441at2"/>
<dbReference type="UniPathway" id="UPA00074">
    <property type="reaction ID" value="UER00128"/>
</dbReference>
<dbReference type="Proteomes" id="UP000008809">
    <property type="component" value="Chromosome"/>
</dbReference>
<dbReference type="GO" id="GO:0005737">
    <property type="term" value="C:cytoplasm"/>
    <property type="evidence" value="ECO:0007669"/>
    <property type="project" value="UniProtKB-SubCell"/>
</dbReference>
<dbReference type="GO" id="GO:0005524">
    <property type="term" value="F:ATP binding"/>
    <property type="evidence" value="ECO:0007669"/>
    <property type="project" value="UniProtKB-KW"/>
</dbReference>
<dbReference type="GO" id="GO:0004359">
    <property type="term" value="F:glutaminase activity"/>
    <property type="evidence" value="ECO:0007669"/>
    <property type="project" value="UniProtKB-EC"/>
</dbReference>
<dbReference type="GO" id="GO:0004642">
    <property type="term" value="F:phosphoribosylformylglycinamidine synthase activity"/>
    <property type="evidence" value="ECO:0007669"/>
    <property type="project" value="UniProtKB-UniRule"/>
</dbReference>
<dbReference type="GO" id="GO:0006189">
    <property type="term" value="P:'de novo' IMP biosynthetic process"/>
    <property type="evidence" value="ECO:0007669"/>
    <property type="project" value="UniProtKB-UniRule"/>
</dbReference>
<dbReference type="CDD" id="cd01740">
    <property type="entry name" value="GATase1_FGAR_AT"/>
    <property type="match status" value="1"/>
</dbReference>
<dbReference type="Gene3D" id="3.40.50.880">
    <property type="match status" value="1"/>
</dbReference>
<dbReference type="HAMAP" id="MF_00421">
    <property type="entry name" value="PurQ"/>
    <property type="match status" value="1"/>
</dbReference>
<dbReference type="InterPro" id="IPR029062">
    <property type="entry name" value="Class_I_gatase-like"/>
</dbReference>
<dbReference type="InterPro" id="IPR010075">
    <property type="entry name" value="PRibForGlyAmidine_synth_PurQ"/>
</dbReference>
<dbReference type="NCBIfam" id="TIGR01737">
    <property type="entry name" value="FGAM_synth_I"/>
    <property type="match status" value="1"/>
</dbReference>
<dbReference type="NCBIfam" id="NF002957">
    <property type="entry name" value="PRK03619.1"/>
    <property type="match status" value="1"/>
</dbReference>
<dbReference type="PANTHER" id="PTHR47552">
    <property type="entry name" value="PHOSPHORIBOSYLFORMYLGLYCINAMIDINE SYNTHASE SUBUNIT PURQ"/>
    <property type="match status" value="1"/>
</dbReference>
<dbReference type="PANTHER" id="PTHR47552:SF1">
    <property type="entry name" value="PHOSPHORIBOSYLFORMYLGLYCINAMIDINE SYNTHASE SUBUNIT PURQ"/>
    <property type="match status" value="1"/>
</dbReference>
<dbReference type="Pfam" id="PF13507">
    <property type="entry name" value="GATase_5"/>
    <property type="match status" value="1"/>
</dbReference>
<dbReference type="PIRSF" id="PIRSF001586">
    <property type="entry name" value="FGAM_synth_I"/>
    <property type="match status" value="1"/>
</dbReference>
<dbReference type="SMART" id="SM01211">
    <property type="entry name" value="GATase_5"/>
    <property type="match status" value="1"/>
</dbReference>
<dbReference type="SUPFAM" id="SSF52317">
    <property type="entry name" value="Class I glutamine amidotransferase-like"/>
    <property type="match status" value="1"/>
</dbReference>
<dbReference type="PROSITE" id="PS51273">
    <property type="entry name" value="GATASE_TYPE_1"/>
    <property type="match status" value="1"/>
</dbReference>
<accession>Q2ITP9</accession>
<protein>
    <recommendedName>
        <fullName evidence="1">Phosphoribosylformylglycinamidine synthase subunit PurQ</fullName>
        <shortName evidence="1">FGAM synthase</shortName>
        <ecNumber evidence="1">6.3.5.3</ecNumber>
    </recommendedName>
    <alternativeName>
        <fullName evidence="1">Formylglycinamide ribonucleotide amidotransferase subunit I</fullName>
        <shortName evidence="1">FGAR amidotransferase I</shortName>
        <shortName evidence="1">FGAR-AT I</shortName>
    </alternativeName>
    <alternativeName>
        <fullName evidence="1">Glutaminase PurQ</fullName>
        <ecNumber evidence="1">3.5.1.2</ecNumber>
    </alternativeName>
    <alternativeName>
        <fullName evidence="1">Phosphoribosylformylglycinamidine synthase subunit I</fullName>
    </alternativeName>
</protein>
<feature type="chain" id="PRO_0000252725" description="Phosphoribosylformylglycinamidine synthase subunit PurQ">
    <location>
        <begin position="1"/>
        <end position="233"/>
    </location>
</feature>
<feature type="domain" description="Glutamine amidotransferase type-1" evidence="1">
    <location>
        <begin position="3"/>
        <end position="233"/>
    </location>
</feature>
<feature type="active site" description="Nucleophile" evidence="1">
    <location>
        <position position="87"/>
    </location>
</feature>
<feature type="active site" evidence="1">
    <location>
        <position position="204"/>
    </location>
</feature>
<feature type="active site" evidence="1">
    <location>
        <position position="206"/>
    </location>
</feature>
<evidence type="ECO:0000255" key="1">
    <source>
        <dbReference type="HAMAP-Rule" id="MF_00421"/>
    </source>
</evidence>